<gene>
    <name type="primary">RPS6</name>
    <name type="ordered locus">YALI0F18766g</name>
</gene>
<dbReference type="EMBL" id="CR382132">
    <property type="protein sequence ID" value="CAG78402.1"/>
    <property type="molecule type" value="Genomic_DNA"/>
</dbReference>
<dbReference type="RefSeq" id="XP_505593.1">
    <property type="nucleotide sequence ID" value="XM_505593.1"/>
</dbReference>
<dbReference type="SMR" id="Q6C169"/>
<dbReference type="FunCoup" id="Q6C169">
    <property type="interactions" value="1156"/>
</dbReference>
<dbReference type="STRING" id="284591.Q6C169"/>
<dbReference type="EnsemblFungi" id="CAG78402">
    <property type="protein sequence ID" value="CAG78402"/>
    <property type="gene ID" value="YALI0_F18766g"/>
</dbReference>
<dbReference type="KEGG" id="yli:2907862"/>
<dbReference type="VEuPathDB" id="FungiDB:YALI0_F18766g"/>
<dbReference type="HOGENOM" id="CLU_046346_0_1_1"/>
<dbReference type="InParanoid" id="Q6C169"/>
<dbReference type="OMA" id="KPRYKAP"/>
<dbReference type="OrthoDB" id="119783at4891"/>
<dbReference type="Proteomes" id="UP000001300">
    <property type="component" value="Chromosome F"/>
</dbReference>
<dbReference type="GO" id="GO:1990904">
    <property type="term" value="C:ribonucleoprotein complex"/>
    <property type="evidence" value="ECO:0007669"/>
    <property type="project" value="UniProtKB-KW"/>
</dbReference>
<dbReference type="GO" id="GO:0005840">
    <property type="term" value="C:ribosome"/>
    <property type="evidence" value="ECO:0007669"/>
    <property type="project" value="UniProtKB-KW"/>
</dbReference>
<dbReference type="GO" id="GO:0003735">
    <property type="term" value="F:structural constituent of ribosome"/>
    <property type="evidence" value="ECO:0007669"/>
    <property type="project" value="InterPro"/>
</dbReference>
<dbReference type="GO" id="GO:0006412">
    <property type="term" value="P:translation"/>
    <property type="evidence" value="ECO:0007669"/>
    <property type="project" value="InterPro"/>
</dbReference>
<dbReference type="Gene3D" id="1.20.5.2650">
    <property type="match status" value="1"/>
</dbReference>
<dbReference type="InterPro" id="IPR001377">
    <property type="entry name" value="Ribosomal_eS6"/>
</dbReference>
<dbReference type="InterPro" id="IPR014401">
    <property type="entry name" value="Ribosomal_eS6-like"/>
</dbReference>
<dbReference type="InterPro" id="IPR018282">
    <property type="entry name" value="Ribosomal_eS6_CS"/>
</dbReference>
<dbReference type="PANTHER" id="PTHR11502">
    <property type="entry name" value="40S RIBOSOMAL PROTEIN S6"/>
    <property type="match status" value="1"/>
</dbReference>
<dbReference type="Pfam" id="PF01092">
    <property type="entry name" value="Ribosomal_S6e"/>
    <property type="match status" value="1"/>
</dbReference>
<dbReference type="PIRSF" id="PIRSF002129">
    <property type="entry name" value="Ribosom_S6_euk"/>
    <property type="match status" value="1"/>
</dbReference>
<dbReference type="SMART" id="SM01405">
    <property type="entry name" value="Ribosomal_S6e"/>
    <property type="match status" value="1"/>
</dbReference>
<dbReference type="PROSITE" id="PS00578">
    <property type="entry name" value="RIBOSOMAL_S6E"/>
    <property type="match status" value="1"/>
</dbReference>
<feature type="chain" id="PRO_0000137341" description="Small ribosomal subunit protein eS6">
    <location>
        <begin position="1"/>
        <end position="242"/>
    </location>
</feature>
<feature type="region of interest" description="Disordered" evidence="3">
    <location>
        <begin position="219"/>
        <end position="242"/>
    </location>
</feature>
<feature type="compositionally biased region" description="Basic and acidic residues" evidence="3">
    <location>
        <begin position="219"/>
        <end position="229"/>
    </location>
</feature>
<feature type="modified residue" description="Phosphoserine" evidence="2">
    <location>
        <position position="233"/>
    </location>
</feature>
<feature type="modified residue" description="Phosphoserine" evidence="2">
    <location>
        <position position="234"/>
    </location>
</feature>
<proteinExistence type="inferred from homology"/>
<protein>
    <recommendedName>
        <fullName evidence="4">Small ribosomal subunit protein eS6</fullName>
    </recommendedName>
    <alternativeName>
        <fullName>40S ribosomal protein S6</fullName>
    </alternativeName>
</protein>
<comment type="PTM">
    <text evidence="1">Phosphorylated.</text>
</comment>
<comment type="similarity">
    <text evidence="4">Belongs to the eukaryotic ribosomal protein eS6 family.</text>
</comment>
<evidence type="ECO:0000250" key="1"/>
<evidence type="ECO:0000255" key="2"/>
<evidence type="ECO:0000256" key="3">
    <source>
        <dbReference type="SAM" id="MobiDB-lite"/>
    </source>
</evidence>
<evidence type="ECO:0000305" key="4"/>
<keyword id="KW-0597">Phosphoprotein</keyword>
<keyword id="KW-1185">Reference proteome</keyword>
<keyword id="KW-0687">Ribonucleoprotein</keyword>
<keyword id="KW-0689">Ribosomal protein</keyword>
<organism>
    <name type="scientific">Yarrowia lipolytica (strain CLIB 122 / E 150)</name>
    <name type="common">Yeast</name>
    <name type="synonym">Candida lipolytica</name>
    <dbReference type="NCBI Taxonomy" id="284591"/>
    <lineage>
        <taxon>Eukaryota</taxon>
        <taxon>Fungi</taxon>
        <taxon>Dikarya</taxon>
        <taxon>Ascomycota</taxon>
        <taxon>Saccharomycotina</taxon>
        <taxon>Dipodascomycetes</taxon>
        <taxon>Dipodascales</taxon>
        <taxon>Dipodascales incertae sedis</taxon>
        <taxon>Yarrowia</taxon>
    </lineage>
</organism>
<reference key="1">
    <citation type="journal article" date="2004" name="Nature">
        <title>Genome evolution in yeasts.</title>
        <authorList>
            <person name="Dujon B."/>
            <person name="Sherman D."/>
            <person name="Fischer G."/>
            <person name="Durrens P."/>
            <person name="Casaregola S."/>
            <person name="Lafontaine I."/>
            <person name="de Montigny J."/>
            <person name="Marck C."/>
            <person name="Neuveglise C."/>
            <person name="Talla E."/>
            <person name="Goffard N."/>
            <person name="Frangeul L."/>
            <person name="Aigle M."/>
            <person name="Anthouard V."/>
            <person name="Babour A."/>
            <person name="Barbe V."/>
            <person name="Barnay S."/>
            <person name="Blanchin S."/>
            <person name="Beckerich J.-M."/>
            <person name="Beyne E."/>
            <person name="Bleykasten C."/>
            <person name="Boisrame A."/>
            <person name="Boyer J."/>
            <person name="Cattolico L."/>
            <person name="Confanioleri F."/>
            <person name="de Daruvar A."/>
            <person name="Despons L."/>
            <person name="Fabre E."/>
            <person name="Fairhead C."/>
            <person name="Ferry-Dumazet H."/>
            <person name="Groppi A."/>
            <person name="Hantraye F."/>
            <person name="Hennequin C."/>
            <person name="Jauniaux N."/>
            <person name="Joyet P."/>
            <person name="Kachouri R."/>
            <person name="Kerrest A."/>
            <person name="Koszul R."/>
            <person name="Lemaire M."/>
            <person name="Lesur I."/>
            <person name="Ma L."/>
            <person name="Muller H."/>
            <person name="Nicaud J.-M."/>
            <person name="Nikolski M."/>
            <person name="Oztas S."/>
            <person name="Ozier-Kalogeropoulos O."/>
            <person name="Pellenz S."/>
            <person name="Potier S."/>
            <person name="Richard G.-F."/>
            <person name="Straub M.-L."/>
            <person name="Suleau A."/>
            <person name="Swennen D."/>
            <person name="Tekaia F."/>
            <person name="Wesolowski-Louvel M."/>
            <person name="Westhof E."/>
            <person name="Wirth B."/>
            <person name="Zeniou-Meyer M."/>
            <person name="Zivanovic Y."/>
            <person name="Bolotin-Fukuhara M."/>
            <person name="Thierry A."/>
            <person name="Bouchier C."/>
            <person name="Caudron B."/>
            <person name="Scarpelli C."/>
            <person name="Gaillardin C."/>
            <person name="Weissenbach J."/>
            <person name="Wincker P."/>
            <person name="Souciet J.-L."/>
        </authorList>
    </citation>
    <scope>NUCLEOTIDE SEQUENCE [LARGE SCALE GENOMIC DNA]</scope>
    <source>
        <strain>CLIB 122 / E 150</strain>
    </source>
</reference>
<sequence length="242" mass="27432">MKLNIAYPAQGTQKCIDIEDEHRVRGFYEKRMGQEVEADFLGDEFKGYVLKITGGNDKQGFPMKQGVMHPTRVRLLLSKDSSCYRSRRAGERKRKSVRGCIVSSDLSVLSVVIVKQGDADIEGLTTETVPRRLGPKRANNIRKLFALSKEDDVRQYVIRREVTTKSGKTYTKAPKIQRLITPRRLAHKAQLREKKVKAIQASKDAAAEYAQLLAKRVAEKKSEKAEEKKRRASSLRTQSVQA</sequence>
<name>RS6_YARLI</name>
<accession>Q6C169</accession>